<protein>
    <recommendedName>
        <fullName>Histidinol-phosphate aminotransferase</fullName>
        <ecNumber>2.6.1.9</ecNumber>
    </recommendedName>
    <alternativeName>
        <fullName>Imidazole acetol-phosphate transaminase</fullName>
    </alternativeName>
</protein>
<comment type="catalytic activity">
    <reaction>
        <text>L-histidinol phosphate + 2-oxoglutarate = 3-(imidazol-4-yl)-2-oxopropyl phosphate + L-glutamate</text>
        <dbReference type="Rhea" id="RHEA:23744"/>
        <dbReference type="ChEBI" id="CHEBI:16810"/>
        <dbReference type="ChEBI" id="CHEBI:29985"/>
        <dbReference type="ChEBI" id="CHEBI:57766"/>
        <dbReference type="ChEBI" id="CHEBI:57980"/>
        <dbReference type="EC" id="2.6.1.9"/>
    </reaction>
</comment>
<comment type="cofactor">
    <cofactor evidence="1">
        <name>pyridoxal 5'-phosphate</name>
        <dbReference type="ChEBI" id="CHEBI:597326"/>
    </cofactor>
</comment>
<comment type="pathway">
    <text>Amino-acid biosynthesis; L-histidine biosynthesis; L-histidine from 5-phospho-alpha-D-ribose 1-diphosphate: step 7/9.</text>
</comment>
<comment type="similarity">
    <text evidence="2">Belongs to the class-II pyridoxal-phosphate-dependent aminotransferase family. Histidinol-phosphate aminotransferase subfamily.</text>
</comment>
<name>HIS8_METJA</name>
<organism>
    <name type="scientific">Methanocaldococcus jannaschii (strain ATCC 43067 / DSM 2661 / JAL-1 / JCM 10045 / NBRC 100440)</name>
    <name type="common">Methanococcus jannaschii</name>
    <dbReference type="NCBI Taxonomy" id="243232"/>
    <lineage>
        <taxon>Archaea</taxon>
        <taxon>Methanobacteriati</taxon>
        <taxon>Methanobacteriota</taxon>
        <taxon>Methanomada group</taxon>
        <taxon>Methanococci</taxon>
        <taxon>Methanococcales</taxon>
        <taxon>Methanocaldococcaceae</taxon>
        <taxon>Methanocaldococcus</taxon>
    </lineage>
</organism>
<dbReference type="EC" id="2.6.1.9"/>
<dbReference type="EMBL" id="L77117">
    <property type="protein sequence ID" value="AAB98960.1"/>
    <property type="molecule type" value="Genomic_DNA"/>
</dbReference>
<dbReference type="PIR" id="C64419">
    <property type="entry name" value="C64419"/>
</dbReference>
<dbReference type="SMR" id="Q58365"/>
<dbReference type="FunCoup" id="Q58365">
    <property type="interactions" value="121"/>
</dbReference>
<dbReference type="STRING" id="243232.MJ_0955"/>
<dbReference type="PaxDb" id="243232-MJ_0955"/>
<dbReference type="EnsemblBacteria" id="AAB98960">
    <property type="protein sequence ID" value="AAB98960"/>
    <property type="gene ID" value="MJ_0955"/>
</dbReference>
<dbReference type="KEGG" id="mja:MJ_0955"/>
<dbReference type="eggNOG" id="arCOG04273">
    <property type="taxonomic scope" value="Archaea"/>
</dbReference>
<dbReference type="HOGENOM" id="CLU_017584_3_3_2"/>
<dbReference type="InParanoid" id="Q58365"/>
<dbReference type="PhylomeDB" id="Q58365"/>
<dbReference type="UniPathway" id="UPA00031">
    <property type="reaction ID" value="UER00012"/>
</dbReference>
<dbReference type="Proteomes" id="UP000000805">
    <property type="component" value="Chromosome"/>
</dbReference>
<dbReference type="GO" id="GO:0004400">
    <property type="term" value="F:histidinol-phosphate transaminase activity"/>
    <property type="evidence" value="ECO:0007669"/>
    <property type="project" value="UniProtKB-UniRule"/>
</dbReference>
<dbReference type="GO" id="GO:0030170">
    <property type="term" value="F:pyridoxal phosphate binding"/>
    <property type="evidence" value="ECO:0007669"/>
    <property type="project" value="InterPro"/>
</dbReference>
<dbReference type="GO" id="GO:0000105">
    <property type="term" value="P:L-histidine biosynthetic process"/>
    <property type="evidence" value="ECO:0007669"/>
    <property type="project" value="UniProtKB-UniRule"/>
</dbReference>
<dbReference type="CDD" id="cd00609">
    <property type="entry name" value="AAT_like"/>
    <property type="match status" value="1"/>
</dbReference>
<dbReference type="Gene3D" id="3.90.1150.10">
    <property type="entry name" value="Aspartate Aminotransferase, domain 1"/>
    <property type="match status" value="1"/>
</dbReference>
<dbReference type="Gene3D" id="3.40.640.10">
    <property type="entry name" value="Type I PLP-dependent aspartate aminotransferase-like (Major domain)"/>
    <property type="match status" value="1"/>
</dbReference>
<dbReference type="HAMAP" id="MF_01023">
    <property type="entry name" value="HisC_aminotrans_2"/>
    <property type="match status" value="1"/>
</dbReference>
<dbReference type="InterPro" id="IPR004839">
    <property type="entry name" value="Aminotransferase_I/II_large"/>
</dbReference>
<dbReference type="InterPro" id="IPR005861">
    <property type="entry name" value="HisP_aminotrans"/>
</dbReference>
<dbReference type="InterPro" id="IPR015424">
    <property type="entry name" value="PyrdxlP-dep_Trfase"/>
</dbReference>
<dbReference type="InterPro" id="IPR015421">
    <property type="entry name" value="PyrdxlP-dep_Trfase_major"/>
</dbReference>
<dbReference type="InterPro" id="IPR015422">
    <property type="entry name" value="PyrdxlP-dep_Trfase_small"/>
</dbReference>
<dbReference type="NCBIfam" id="TIGR01141">
    <property type="entry name" value="hisC"/>
    <property type="match status" value="1"/>
</dbReference>
<dbReference type="PANTHER" id="PTHR42885:SF2">
    <property type="entry name" value="HISTIDINOL-PHOSPHATE AMINOTRANSFERASE"/>
    <property type="match status" value="1"/>
</dbReference>
<dbReference type="PANTHER" id="PTHR42885">
    <property type="entry name" value="HISTIDINOL-PHOSPHATE AMINOTRANSFERASE-RELATED"/>
    <property type="match status" value="1"/>
</dbReference>
<dbReference type="Pfam" id="PF00155">
    <property type="entry name" value="Aminotran_1_2"/>
    <property type="match status" value="1"/>
</dbReference>
<dbReference type="SUPFAM" id="SSF53383">
    <property type="entry name" value="PLP-dependent transferases"/>
    <property type="match status" value="1"/>
</dbReference>
<reference key="1">
    <citation type="journal article" date="1996" name="Science">
        <title>Complete genome sequence of the methanogenic archaeon, Methanococcus jannaschii.</title>
        <authorList>
            <person name="Bult C.J."/>
            <person name="White O."/>
            <person name="Olsen G.J."/>
            <person name="Zhou L."/>
            <person name="Fleischmann R.D."/>
            <person name="Sutton G.G."/>
            <person name="Blake J.A."/>
            <person name="FitzGerald L.M."/>
            <person name="Clayton R.A."/>
            <person name="Gocayne J.D."/>
            <person name="Kerlavage A.R."/>
            <person name="Dougherty B.A."/>
            <person name="Tomb J.-F."/>
            <person name="Adams M.D."/>
            <person name="Reich C.I."/>
            <person name="Overbeek R."/>
            <person name="Kirkness E.F."/>
            <person name="Weinstock K.G."/>
            <person name="Merrick J.M."/>
            <person name="Glodek A."/>
            <person name="Scott J.L."/>
            <person name="Geoghagen N.S.M."/>
            <person name="Weidman J.F."/>
            <person name="Fuhrmann J.L."/>
            <person name="Nguyen D."/>
            <person name="Utterback T.R."/>
            <person name="Kelley J.M."/>
            <person name="Peterson J.D."/>
            <person name="Sadow P.W."/>
            <person name="Hanna M.C."/>
            <person name="Cotton M.D."/>
            <person name="Roberts K.M."/>
            <person name="Hurst M.A."/>
            <person name="Kaine B.P."/>
            <person name="Borodovsky M."/>
            <person name="Klenk H.-P."/>
            <person name="Fraser C.M."/>
            <person name="Smith H.O."/>
            <person name="Woese C.R."/>
            <person name="Venter J.C."/>
        </authorList>
    </citation>
    <scope>NUCLEOTIDE SEQUENCE [LARGE SCALE GENOMIC DNA]</scope>
    <source>
        <strain>ATCC 43067 / DSM 2661 / JAL-1 / JCM 10045 / NBRC 100440</strain>
    </source>
</reference>
<proteinExistence type="inferred from homology"/>
<gene>
    <name type="primary">hisC</name>
    <name type="ordered locus">MJ0955</name>
</gene>
<accession>Q58365</accession>
<feature type="chain" id="PRO_0000153496" description="Histidinol-phosphate aminotransferase">
    <location>
        <begin position="1"/>
        <end position="373"/>
    </location>
</feature>
<feature type="modified residue" description="N6-(pyridoxal phosphate)lysine" evidence="1">
    <location>
        <position position="231"/>
    </location>
</feature>
<evidence type="ECO:0000250" key="1"/>
<evidence type="ECO:0000305" key="2"/>
<keyword id="KW-0028">Amino-acid biosynthesis</keyword>
<keyword id="KW-0032">Aminotransferase</keyword>
<keyword id="KW-0368">Histidine biosynthesis</keyword>
<keyword id="KW-0663">Pyridoxal phosphate</keyword>
<keyword id="KW-1185">Reference proteome</keyword>
<keyword id="KW-0808">Transferase</keyword>
<sequence length="373" mass="42962">MGDWMIENKVRDVVKKLKPYVPGKSKEEIARAYGIKPEDIIKLGSNENPWGPSPKIKEKILDEIDKIHQYPEPVNPILMKELSKFLNVDEENIIVGGDGADEIIDTIFRTFVDDGDEVIIPIPTFTQYRVSATIHNAKIKYAKYDKEKDFKLNVESVLNNITDKTKVIFLCTPNNPTGNIIENRDVERVINETDALVVIDHAYIEYAKKEYDWTQKAPEYDNVIVLRTFSKVFGLAGMRVGYGVANKKIIDYMMRVKPIFSLTRLSQVCAITALRDREFFERCVRDGIKSREMLYNGLKKFKDIKVYPSEANYLLVELKTMKAKEFCEELLKRGVIVRDCTSFDGLGDNYVRVSIGTFEEVERFLKILEEIIS</sequence>